<evidence type="ECO:0000255" key="1">
    <source>
        <dbReference type="HAMAP-Rule" id="MF_00244"/>
    </source>
</evidence>
<sequence>MDTIALFGGSFDPPHIGHEAIIEALKKFKDIDKIIIMPTFLNPFKSNFYAPSSLRVKWLREIFKEEKRVEVSDYEVLQNRQVPTIETAKHLLESYKKIYLVIGADNLAKLRDWNSYDELKELVTFVVATRDDIEIPDEFIMLSVDEKISSTQLRENIQLSKLPKKCAKEIYDFYKEEHCKTE</sequence>
<gene>
    <name evidence="1" type="primary">nadD</name>
    <name type="ordered locus">Suden_1755</name>
</gene>
<proteinExistence type="inferred from homology"/>
<feature type="chain" id="PRO_0000336740" description="Probable nicotinate-nucleotide adenylyltransferase">
    <location>
        <begin position="1"/>
        <end position="182"/>
    </location>
</feature>
<accession>Q30PQ2</accession>
<reference key="1">
    <citation type="journal article" date="2008" name="Appl. Environ. Microbiol.">
        <title>Genome of the epsilonproteobacterial chemolithoautotroph Sulfurimonas denitrificans.</title>
        <authorList>
            <person name="Sievert S.M."/>
            <person name="Scott K.M."/>
            <person name="Klotz M.G."/>
            <person name="Chain P.S.G."/>
            <person name="Hauser L.J."/>
            <person name="Hemp J."/>
            <person name="Huegler M."/>
            <person name="Land M."/>
            <person name="Lapidus A."/>
            <person name="Larimer F.W."/>
            <person name="Lucas S."/>
            <person name="Malfatti S.A."/>
            <person name="Meyer F."/>
            <person name="Paulsen I.T."/>
            <person name="Ren Q."/>
            <person name="Simon J."/>
            <person name="Bailey K."/>
            <person name="Diaz E."/>
            <person name="Fitzpatrick K.A."/>
            <person name="Glover B."/>
            <person name="Gwatney N."/>
            <person name="Korajkic A."/>
            <person name="Long A."/>
            <person name="Mobberley J.M."/>
            <person name="Pantry S.N."/>
            <person name="Pazder G."/>
            <person name="Peterson S."/>
            <person name="Quintanilla J.D."/>
            <person name="Sprinkle R."/>
            <person name="Stephens J."/>
            <person name="Thomas P."/>
            <person name="Vaughn R."/>
            <person name="Weber M.J."/>
            <person name="Wooten L.L."/>
        </authorList>
    </citation>
    <scope>NUCLEOTIDE SEQUENCE [LARGE SCALE GENOMIC DNA]</scope>
    <source>
        <strain>ATCC 33889 / DSM 1251</strain>
    </source>
</reference>
<comment type="function">
    <text evidence="1">Catalyzes the reversible adenylation of nicotinate mononucleotide (NaMN) to nicotinic acid adenine dinucleotide (NaAD).</text>
</comment>
<comment type="catalytic activity">
    <reaction evidence="1">
        <text>nicotinate beta-D-ribonucleotide + ATP + H(+) = deamido-NAD(+) + diphosphate</text>
        <dbReference type="Rhea" id="RHEA:22860"/>
        <dbReference type="ChEBI" id="CHEBI:15378"/>
        <dbReference type="ChEBI" id="CHEBI:30616"/>
        <dbReference type="ChEBI" id="CHEBI:33019"/>
        <dbReference type="ChEBI" id="CHEBI:57502"/>
        <dbReference type="ChEBI" id="CHEBI:58437"/>
        <dbReference type="EC" id="2.7.7.18"/>
    </reaction>
</comment>
<comment type="pathway">
    <text evidence="1">Cofactor biosynthesis; NAD(+) biosynthesis; deamido-NAD(+) from nicotinate D-ribonucleotide: step 1/1.</text>
</comment>
<comment type="similarity">
    <text evidence="1">Belongs to the NadD family.</text>
</comment>
<organism>
    <name type="scientific">Sulfurimonas denitrificans (strain ATCC 33889 / DSM 1251)</name>
    <name type="common">Thiomicrospira denitrificans (strain ATCC 33889 / DSM 1251)</name>
    <dbReference type="NCBI Taxonomy" id="326298"/>
    <lineage>
        <taxon>Bacteria</taxon>
        <taxon>Pseudomonadati</taxon>
        <taxon>Campylobacterota</taxon>
        <taxon>Epsilonproteobacteria</taxon>
        <taxon>Campylobacterales</taxon>
        <taxon>Sulfurimonadaceae</taxon>
        <taxon>Sulfurimonas</taxon>
    </lineage>
</organism>
<dbReference type="EC" id="2.7.7.18" evidence="1"/>
<dbReference type="EMBL" id="CP000153">
    <property type="protein sequence ID" value="ABB45029.1"/>
    <property type="molecule type" value="Genomic_DNA"/>
</dbReference>
<dbReference type="RefSeq" id="WP_011373370.1">
    <property type="nucleotide sequence ID" value="NC_007575.1"/>
</dbReference>
<dbReference type="SMR" id="Q30PQ2"/>
<dbReference type="STRING" id="326298.Suden_1755"/>
<dbReference type="KEGG" id="tdn:Suden_1755"/>
<dbReference type="eggNOG" id="COG1057">
    <property type="taxonomic scope" value="Bacteria"/>
</dbReference>
<dbReference type="HOGENOM" id="CLU_069765_3_2_7"/>
<dbReference type="OrthoDB" id="5295945at2"/>
<dbReference type="UniPathway" id="UPA00253">
    <property type="reaction ID" value="UER00332"/>
</dbReference>
<dbReference type="Proteomes" id="UP000002714">
    <property type="component" value="Chromosome"/>
</dbReference>
<dbReference type="GO" id="GO:0005524">
    <property type="term" value="F:ATP binding"/>
    <property type="evidence" value="ECO:0007669"/>
    <property type="project" value="UniProtKB-KW"/>
</dbReference>
<dbReference type="GO" id="GO:0004515">
    <property type="term" value="F:nicotinate-nucleotide adenylyltransferase activity"/>
    <property type="evidence" value="ECO:0007669"/>
    <property type="project" value="UniProtKB-UniRule"/>
</dbReference>
<dbReference type="GO" id="GO:0009435">
    <property type="term" value="P:NAD biosynthetic process"/>
    <property type="evidence" value="ECO:0007669"/>
    <property type="project" value="UniProtKB-UniRule"/>
</dbReference>
<dbReference type="CDD" id="cd02165">
    <property type="entry name" value="NMNAT"/>
    <property type="match status" value="1"/>
</dbReference>
<dbReference type="Gene3D" id="3.40.50.620">
    <property type="entry name" value="HUPs"/>
    <property type="match status" value="1"/>
</dbReference>
<dbReference type="HAMAP" id="MF_00244">
    <property type="entry name" value="NaMN_adenylyltr"/>
    <property type="match status" value="1"/>
</dbReference>
<dbReference type="InterPro" id="IPR004821">
    <property type="entry name" value="Cyt_trans-like"/>
</dbReference>
<dbReference type="InterPro" id="IPR005248">
    <property type="entry name" value="NadD/NMNAT"/>
</dbReference>
<dbReference type="InterPro" id="IPR014729">
    <property type="entry name" value="Rossmann-like_a/b/a_fold"/>
</dbReference>
<dbReference type="NCBIfam" id="TIGR00125">
    <property type="entry name" value="cyt_tran_rel"/>
    <property type="match status" value="1"/>
</dbReference>
<dbReference type="NCBIfam" id="TIGR00482">
    <property type="entry name" value="nicotinate (nicotinamide) nucleotide adenylyltransferase"/>
    <property type="match status" value="1"/>
</dbReference>
<dbReference type="PANTHER" id="PTHR39321">
    <property type="entry name" value="NICOTINATE-NUCLEOTIDE ADENYLYLTRANSFERASE-RELATED"/>
    <property type="match status" value="1"/>
</dbReference>
<dbReference type="PANTHER" id="PTHR39321:SF3">
    <property type="entry name" value="PHOSPHOPANTETHEINE ADENYLYLTRANSFERASE"/>
    <property type="match status" value="1"/>
</dbReference>
<dbReference type="Pfam" id="PF01467">
    <property type="entry name" value="CTP_transf_like"/>
    <property type="match status" value="1"/>
</dbReference>
<dbReference type="SUPFAM" id="SSF52374">
    <property type="entry name" value="Nucleotidylyl transferase"/>
    <property type="match status" value="1"/>
</dbReference>
<name>NADD_SULDN</name>
<protein>
    <recommendedName>
        <fullName evidence="1">Probable nicotinate-nucleotide adenylyltransferase</fullName>
        <ecNumber evidence="1">2.7.7.18</ecNumber>
    </recommendedName>
    <alternativeName>
        <fullName evidence="1">Deamido-NAD(+) diphosphorylase</fullName>
    </alternativeName>
    <alternativeName>
        <fullName evidence="1">Deamido-NAD(+) pyrophosphorylase</fullName>
    </alternativeName>
    <alternativeName>
        <fullName evidence="1">Nicotinate mononucleotide adenylyltransferase</fullName>
        <shortName evidence="1">NaMN adenylyltransferase</shortName>
    </alternativeName>
</protein>
<keyword id="KW-0067">ATP-binding</keyword>
<keyword id="KW-0520">NAD</keyword>
<keyword id="KW-0547">Nucleotide-binding</keyword>
<keyword id="KW-0548">Nucleotidyltransferase</keyword>
<keyword id="KW-0662">Pyridine nucleotide biosynthesis</keyword>
<keyword id="KW-1185">Reference proteome</keyword>
<keyword id="KW-0808">Transferase</keyword>